<gene>
    <name type="primary">Scel</name>
</gene>
<sequence>MSNFSSRKKSPTGNDLKSARGAELRQQGFQDVNKRRAFLQDNSWIKKPPEEEQDGNYGRVVLNRHNSHDALDRKLIERDEPKATISRYRSEDMLDRTLSSFRTPQSTKTPAVSSFNANTTATASTPATTPVKKKRQSWFPPPPPGHNASPSTAASRRDPALHPPLPPKPCSPIASPKPLGRTNRQIHAATAGACGETERHAERNIRTEDLDDIIRVAAALQKTDKGEELDNLIRMNKSLNRNQGLDGLFRANLKAQQLDKRAQSLESLIYMNTQTDRDGKGNQAFGSLKKINQRADPDRRSQDLRSVIRTHATAERIGRRKQDLDGLIKVNPDTNKNMKRGKSLDNLIKVTPEVNRSNKGGPSLDNFTKGVPARSRANQRDQDLDSLIKVTPSANRSSQHSLDELINTSPQTIKTTARHQDLDKFIKVNPDVLTNNQRNHDVDSTIRGNPTGTRCEQSEELDNLIKVKPSALRNTNGGQDLESLTEVNSHVAEKNGRIDGQANGLTNSLFKESTRASVYSYEARNSLSSNSGNKNGGPKDTVVYTRTYVENSKSPKDGYQENISGKYIQTVYSTSDRSVIERDMCTYCRKPLGVETKMILDELQICCHSTCFKCEICKRPLENLQAGDSIWIYRQTIHCEPCYSKVMAKWIQ</sequence>
<reference key="1">
    <citation type="journal article" date="2000" name="Genomics">
        <title>Gene characterization of sciellin (SCEL) and protein localization in vertebrate epithelia displaying barrier properties.</title>
        <authorList>
            <person name="Champliaud M.-F."/>
            <person name="Baden H.P."/>
            <person name="Koch M."/>
            <person name="Jin W."/>
            <person name="Burgeson R.E."/>
            <person name="Viel A."/>
        </authorList>
    </citation>
    <scope>NUCLEOTIDE SEQUENCE [MRNA]</scope>
    <source>
        <tissue>Skin</tissue>
    </source>
</reference>
<reference key="2">
    <citation type="submission" date="2005-07" db="EMBL/GenBank/DDBJ databases">
        <authorList>
            <person name="Champliaud M.-F."/>
            <person name="Burgeson R.E."/>
            <person name="Baden H.P."/>
        </authorList>
    </citation>
    <scope>SEQUENCE REVISION TO 157; 167-168; 343; 480-481; 508 AND 530-544</scope>
</reference>
<reference key="3">
    <citation type="journal article" date="2005" name="Science">
        <title>The transcriptional landscape of the mammalian genome.</title>
        <authorList>
            <person name="Carninci P."/>
            <person name="Kasukawa T."/>
            <person name="Katayama S."/>
            <person name="Gough J."/>
            <person name="Frith M.C."/>
            <person name="Maeda N."/>
            <person name="Oyama R."/>
            <person name="Ravasi T."/>
            <person name="Lenhard B."/>
            <person name="Wells C."/>
            <person name="Kodzius R."/>
            <person name="Shimokawa K."/>
            <person name="Bajic V.B."/>
            <person name="Brenner S.E."/>
            <person name="Batalov S."/>
            <person name="Forrest A.R."/>
            <person name="Zavolan M."/>
            <person name="Davis M.J."/>
            <person name="Wilming L.G."/>
            <person name="Aidinis V."/>
            <person name="Allen J.E."/>
            <person name="Ambesi-Impiombato A."/>
            <person name="Apweiler R."/>
            <person name="Aturaliya R.N."/>
            <person name="Bailey T.L."/>
            <person name="Bansal M."/>
            <person name="Baxter L."/>
            <person name="Beisel K.W."/>
            <person name="Bersano T."/>
            <person name="Bono H."/>
            <person name="Chalk A.M."/>
            <person name="Chiu K.P."/>
            <person name="Choudhary V."/>
            <person name="Christoffels A."/>
            <person name="Clutterbuck D.R."/>
            <person name="Crowe M.L."/>
            <person name="Dalla E."/>
            <person name="Dalrymple B.P."/>
            <person name="de Bono B."/>
            <person name="Della Gatta G."/>
            <person name="di Bernardo D."/>
            <person name="Down T."/>
            <person name="Engstrom P."/>
            <person name="Fagiolini M."/>
            <person name="Faulkner G."/>
            <person name="Fletcher C.F."/>
            <person name="Fukushima T."/>
            <person name="Furuno M."/>
            <person name="Futaki S."/>
            <person name="Gariboldi M."/>
            <person name="Georgii-Hemming P."/>
            <person name="Gingeras T.R."/>
            <person name="Gojobori T."/>
            <person name="Green R.E."/>
            <person name="Gustincich S."/>
            <person name="Harbers M."/>
            <person name="Hayashi Y."/>
            <person name="Hensch T.K."/>
            <person name="Hirokawa N."/>
            <person name="Hill D."/>
            <person name="Huminiecki L."/>
            <person name="Iacono M."/>
            <person name="Ikeo K."/>
            <person name="Iwama A."/>
            <person name="Ishikawa T."/>
            <person name="Jakt M."/>
            <person name="Kanapin A."/>
            <person name="Katoh M."/>
            <person name="Kawasawa Y."/>
            <person name="Kelso J."/>
            <person name="Kitamura H."/>
            <person name="Kitano H."/>
            <person name="Kollias G."/>
            <person name="Krishnan S.P."/>
            <person name="Kruger A."/>
            <person name="Kummerfeld S.K."/>
            <person name="Kurochkin I.V."/>
            <person name="Lareau L.F."/>
            <person name="Lazarevic D."/>
            <person name="Lipovich L."/>
            <person name="Liu J."/>
            <person name="Liuni S."/>
            <person name="McWilliam S."/>
            <person name="Madan Babu M."/>
            <person name="Madera M."/>
            <person name="Marchionni L."/>
            <person name="Matsuda H."/>
            <person name="Matsuzawa S."/>
            <person name="Miki H."/>
            <person name="Mignone F."/>
            <person name="Miyake S."/>
            <person name="Morris K."/>
            <person name="Mottagui-Tabar S."/>
            <person name="Mulder N."/>
            <person name="Nakano N."/>
            <person name="Nakauchi H."/>
            <person name="Ng P."/>
            <person name="Nilsson R."/>
            <person name="Nishiguchi S."/>
            <person name="Nishikawa S."/>
            <person name="Nori F."/>
            <person name="Ohara O."/>
            <person name="Okazaki Y."/>
            <person name="Orlando V."/>
            <person name="Pang K.C."/>
            <person name="Pavan W.J."/>
            <person name="Pavesi G."/>
            <person name="Pesole G."/>
            <person name="Petrovsky N."/>
            <person name="Piazza S."/>
            <person name="Reed J."/>
            <person name="Reid J.F."/>
            <person name="Ring B.Z."/>
            <person name="Ringwald M."/>
            <person name="Rost B."/>
            <person name="Ruan Y."/>
            <person name="Salzberg S.L."/>
            <person name="Sandelin A."/>
            <person name="Schneider C."/>
            <person name="Schoenbach C."/>
            <person name="Sekiguchi K."/>
            <person name="Semple C.A."/>
            <person name="Seno S."/>
            <person name="Sessa L."/>
            <person name="Sheng Y."/>
            <person name="Shibata Y."/>
            <person name="Shimada H."/>
            <person name="Shimada K."/>
            <person name="Silva D."/>
            <person name="Sinclair B."/>
            <person name="Sperling S."/>
            <person name="Stupka E."/>
            <person name="Sugiura K."/>
            <person name="Sultana R."/>
            <person name="Takenaka Y."/>
            <person name="Taki K."/>
            <person name="Tammoja K."/>
            <person name="Tan S.L."/>
            <person name="Tang S."/>
            <person name="Taylor M.S."/>
            <person name="Tegner J."/>
            <person name="Teichmann S.A."/>
            <person name="Ueda H.R."/>
            <person name="van Nimwegen E."/>
            <person name="Verardo R."/>
            <person name="Wei C.L."/>
            <person name="Yagi K."/>
            <person name="Yamanishi H."/>
            <person name="Zabarovsky E."/>
            <person name="Zhu S."/>
            <person name="Zimmer A."/>
            <person name="Hide W."/>
            <person name="Bult C."/>
            <person name="Grimmond S.M."/>
            <person name="Teasdale R.D."/>
            <person name="Liu E.T."/>
            <person name="Brusic V."/>
            <person name="Quackenbush J."/>
            <person name="Wahlestedt C."/>
            <person name="Mattick J.S."/>
            <person name="Hume D.A."/>
            <person name="Kai C."/>
            <person name="Sasaki D."/>
            <person name="Tomaru Y."/>
            <person name="Fukuda S."/>
            <person name="Kanamori-Katayama M."/>
            <person name="Suzuki M."/>
            <person name="Aoki J."/>
            <person name="Arakawa T."/>
            <person name="Iida J."/>
            <person name="Imamura K."/>
            <person name="Itoh M."/>
            <person name="Kato T."/>
            <person name="Kawaji H."/>
            <person name="Kawagashira N."/>
            <person name="Kawashima T."/>
            <person name="Kojima M."/>
            <person name="Kondo S."/>
            <person name="Konno H."/>
            <person name="Nakano K."/>
            <person name="Ninomiya N."/>
            <person name="Nishio T."/>
            <person name="Okada M."/>
            <person name="Plessy C."/>
            <person name="Shibata K."/>
            <person name="Shiraki T."/>
            <person name="Suzuki S."/>
            <person name="Tagami M."/>
            <person name="Waki K."/>
            <person name="Watahiki A."/>
            <person name="Okamura-Oho Y."/>
            <person name="Suzuki H."/>
            <person name="Kawai J."/>
            <person name="Hayashizaki Y."/>
        </authorList>
    </citation>
    <scope>NUCLEOTIDE SEQUENCE [LARGE SCALE MRNA] OF 1-201</scope>
    <source>
        <strain>C57BL/6J</strain>
        <tissue>Epididymis</tissue>
    </source>
</reference>
<reference key="4">
    <citation type="journal article" date="2010" name="Cell">
        <title>A tissue-specific atlas of mouse protein phosphorylation and expression.</title>
        <authorList>
            <person name="Huttlin E.L."/>
            <person name="Jedrychowski M.P."/>
            <person name="Elias J.E."/>
            <person name="Goswami T."/>
            <person name="Rad R."/>
            <person name="Beausoleil S.A."/>
            <person name="Villen J."/>
            <person name="Haas W."/>
            <person name="Sowa M.E."/>
            <person name="Gygi S.P."/>
        </authorList>
    </citation>
    <scope>PHOSPHORYLATION [LARGE SCALE ANALYSIS] AT SER-264 AND SER-343</scope>
    <scope>IDENTIFICATION BY MASS SPECTROMETRY [LARGE SCALE ANALYSIS]</scope>
    <source>
        <tissue>Kidney</tissue>
        <tissue>Lung</tissue>
    </source>
</reference>
<reference key="5">
    <citation type="journal article" date="2013" name="Mol. Cell">
        <title>SIRT5-mediated lysine desuccinylation impacts diverse metabolic pathways.</title>
        <authorList>
            <person name="Park J."/>
            <person name="Chen Y."/>
            <person name="Tishkoff D.X."/>
            <person name="Peng C."/>
            <person name="Tan M."/>
            <person name="Dai L."/>
            <person name="Xie Z."/>
            <person name="Zhang Y."/>
            <person name="Zwaans B.M."/>
            <person name="Skinner M.E."/>
            <person name="Lombard D.B."/>
            <person name="Zhao Y."/>
        </authorList>
    </citation>
    <scope>ACETYLATION [LARGE SCALE ANALYSIS] AT LYS-82</scope>
    <scope>IDENTIFICATION BY MASS SPECTROMETRY [LARGE SCALE ANALYSIS]</scope>
    <source>
        <tissue>Embryonic fibroblast</tissue>
    </source>
</reference>
<proteinExistence type="evidence at protein level"/>
<protein>
    <recommendedName>
        <fullName>Sciellin</fullName>
    </recommendedName>
</protein>
<evidence type="ECO:0000250" key="1"/>
<evidence type="ECO:0000255" key="2">
    <source>
        <dbReference type="PROSITE-ProRule" id="PRU00125"/>
    </source>
</evidence>
<evidence type="ECO:0000256" key="3">
    <source>
        <dbReference type="SAM" id="MobiDB-lite"/>
    </source>
</evidence>
<evidence type="ECO:0007744" key="4">
    <source>
    </source>
</evidence>
<evidence type="ECO:0007744" key="5">
    <source>
    </source>
</evidence>
<accession>Q9EQG3</accession>
<accession>Q9CTT9</accession>
<feature type="chain" id="PRO_0000075904" description="Sciellin">
    <location>
        <begin position="1"/>
        <end position="652"/>
    </location>
</feature>
<feature type="repeat" description="1">
    <location>
        <begin position="207"/>
        <end position="226"/>
    </location>
</feature>
<feature type="repeat" description="2">
    <location>
        <begin position="227"/>
        <end position="241"/>
    </location>
</feature>
<feature type="repeat" description="3">
    <location>
        <begin position="242"/>
        <end position="261"/>
    </location>
</feature>
<feature type="repeat" description="4">
    <location>
        <begin position="262"/>
        <end position="281"/>
    </location>
</feature>
<feature type="repeat" description="5">
    <location>
        <begin position="282"/>
        <end position="301"/>
    </location>
</feature>
<feature type="repeat" description="6">
    <location>
        <begin position="302"/>
        <end position="320"/>
    </location>
</feature>
<feature type="repeat" description="7">
    <location>
        <begin position="321"/>
        <end position="340"/>
    </location>
</feature>
<feature type="repeat" description="8">
    <location>
        <begin position="341"/>
        <end position="360"/>
    </location>
</feature>
<feature type="repeat" description="9">
    <location>
        <begin position="361"/>
        <end position="380"/>
    </location>
</feature>
<feature type="repeat" description="10">
    <location>
        <begin position="381"/>
        <end position="398"/>
    </location>
</feature>
<feature type="repeat" description="11">
    <location>
        <begin position="399"/>
        <end position="418"/>
    </location>
</feature>
<feature type="repeat" description="12">
    <location>
        <begin position="419"/>
        <end position="438"/>
    </location>
</feature>
<feature type="repeat" description="13">
    <location>
        <begin position="439"/>
        <end position="458"/>
    </location>
</feature>
<feature type="repeat" description="14">
    <location>
        <begin position="459"/>
        <end position="477"/>
    </location>
</feature>
<feature type="repeat" description="15">
    <location>
        <begin position="478"/>
        <end position="496"/>
    </location>
</feature>
<feature type="domain" description="LIM zinc-binding" evidence="2">
    <location>
        <begin position="583"/>
        <end position="649"/>
    </location>
</feature>
<feature type="region of interest" description="Disordered" evidence="3">
    <location>
        <begin position="1"/>
        <end position="29"/>
    </location>
</feature>
<feature type="region of interest" description="Disordered" evidence="3">
    <location>
        <begin position="43"/>
        <end position="180"/>
    </location>
</feature>
<feature type="region of interest" description="15 X approximate tandem repeats">
    <location>
        <begin position="207"/>
        <end position="496"/>
    </location>
</feature>
<feature type="region of interest" description="Disordered" evidence="3">
    <location>
        <begin position="353"/>
        <end position="385"/>
    </location>
</feature>
<feature type="region of interest" description="Disordered" evidence="3">
    <location>
        <begin position="436"/>
        <end position="455"/>
    </location>
</feature>
<feature type="compositionally biased region" description="Basic residues" evidence="3">
    <location>
        <begin position="1"/>
        <end position="10"/>
    </location>
</feature>
<feature type="compositionally biased region" description="Basic and acidic residues" evidence="3">
    <location>
        <begin position="66"/>
        <end position="95"/>
    </location>
</feature>
<feature type="compositionally biased region" description="Polar residues" evidence="3">
    <location>
        <begin position="97"/>
        <end position="110"/>
    </location>
</feature>
<feature type="compositionally biased region" description="Low complexity" evidence="3">
    <location>
        <begin position="111"/>
        <end position="130"/>
    </location>
</feature>
<feature type="compositionally biased region" description="Pro residues" evidence="3">
    <location>
        <begin position="161"/>
        <end position="170"/>
    </location>
</feature>
<feature type="compositionally biased region" description="Polar residues" evidence="3">
    <location>
        <begin position="446"/>
        <end position="455"/>
    </location>
</feature>
<feature type="modified residue" description="N6-acetyllysine" evidence="5">
    <location>
        <position position="82"/>
    </location>
</feature>
<feature type="modified residue" description="Phosphoserine" evidence="4">
    <location>
        <position position="264"/>
    </location>
</feature>
<feature type="modified residue" description="Phosphoserine" evidence="4">
    <location>
        <position position="343"/>
    </location>
</feature>
<organism>
    <name type="scientific">Mus musculus</name>
    <name type="common">Mouse</name>
    <dbReference type="NCBI Taxonomy" id="10090"/>
    <lineage>
        <taxon>Eukaryota</taxon>
        <taxon>Metazoa</taxon>
        <taxon>Chordata</taxon>
        <taxon>Craniata</taxon>
        <taxon>Vertebrata</taxon>
        <taxon>Euteleostomi</taxon>
        <taxon>Mammalia</taxon>
        <taxon>Eutheria</taxon>
        <taxon>Euarchontoglires</taxon>
        <taxon>Glires</taxon>
        <taxon>Rodentia</taxon>
        <taxon>Myomorpha</taxon>
        <taxon>Muroidea</taxon>
        <taxon>Muridae</taxon>
        <taxon>Murinae</taxon>
        <taxon>Mus</taxon>
        <taxon>Mus</taxon>
    </lineage>
</organism>
<name>SCEL_MOUSE</name>
<dbReference type="EMBL" id="AF245700">
    <property type="protein sequence ID" value="AAG40727.2"/>
    <property type="molecule type" value="mRNA"/>
</dbReference>
<dbReference type="EMBL" id="AK020346">
    <property type="protein sequence ID" value="BAB32078.1"/>
    <property type="molecule type" value="mRNA"/>
</dbReference>
<dbReference type="CCDS" id="CCDS37002.1"/>
<dbReference type="RefSeq" id="NP_075024.2">
    <property type="nucleotide sequence ID" value="NM_022886.2"/>
</dbReference>
<dbReference type="RefSeq" id="XP_006519418.1">
    <property type="nucleotide sequence ID" value="XM_006519355.5"/>
</dbReference>
<dbReference type="BioGRID" id="211114">
    <property type="interactions" value="1"/>
</dbReference>
<dbReference type="FunCoup" id="Q9EQG3">
    <property type="interactions" value="342"/>
</dbReference>
<dbReference type="IntAct" id="Q9EQG3">
    <property type="interactions" value="1"/>
</dbReference>
<dbReference type="MINT" id="Q9EQG3"/>
<dbReference type="STRING" id="10090.ENSMUSP00000093233"/>
<dbReference type="iPTMnet" id="Q9EQG3"/>
<dbReference type="PhosphoSitePlus" id="Q9EQG3"/>
<dbReference type="PaxDb" id="10090-ENSMUSP00000093233"/>
<dbReference type="ProteomicsDB" id="255356"/>
<dbReference type="Antibodypedia" id="24603">
    <property type="antibodies" value="160 antibodies from 25 providers"/>
</dbReference>
<dbReference type="DNASU" id="64929"/>
<dbReference type="Ensembl" id="ENSMUST00000095576.5">
    <property type="protein sequence ID" value="ENSMUSP00000093233.4"/>
    <property type="gene ID" value="ENSMUSG00000022123.10"/>
</dbReference>
<dbReference type="GeneID" id="64929"/>
<dbReference type="KEGG" id="mmu:64929"/>
<dbReference type="UCSC" id="uc007uwr.1">
    <property type="organism name" value="mouse"/>
</dbReference>
<dbReference type="AGR" id="MGI:1891228"/>
<dbReference type="CTD" id="8796"/>
<dbReference type="MGI" id="MGI:1891228">
    <property type="gene designation" value="Scel"/>
</dbReference>
<dbReference type="VEuPathDB" id="HostDB:ENSMUSG00000022123"/>
<dbReference type="eggNOG" id="KOG1704">
    <property type="taxonomic scope" value="Eukaryota"/>
</dbReference>
<dbReference type="GeneTree" id="ENSGT00530000063872"/>
<dbReference type="HOGENOM" id="CLU_399516_0_0_1"/>
<dbReference type="InParanoid" id="Q9EQG3"/>
<dbReference type="OMA" id="WIYKQTI"/>
<dbReference type="OrthoDB" id="9908139at2759"/>
<dbReference type="PhylomeDB" id="Q9EQG3"/>
<dbReference type="TreeFam" id="TF335114"/>
<dbReference type="BioGRID-ORCS" id="64929">
    <property type="hits" value="1 hit in 77 CRISPR screens"/>
</dbReference>
<dbReference type="ChiTaRS" id="Scel">
    <property type="organism name" value="mouse"/>
</dbReference>
<dbReference type="PRO" id="PR:Q9EQG3"/>
<dbReference type="Proteomes" id="UP000000589">
    <property type="component" value="Chromosome 14"/>
</dbReference>
<dbReference type="RNAct" id="Q9EQG3">
    <property type="molecule type" value="protein"/>
</dbReference>
<dbReference type="Bgee" id="ENSMUSG00000022123">
    <property type="expression patterns" value="Expressed in conjunctival fornix and 117 other cell types or tissues"/>
</dbReference>
<dbReference type="ExpressionAtlas" id="Q9EQG3">
    <property type="expression patterns" value="baseline and differential"/>
</dbReference>
<dbReference type="GO" id="GO:0005737">
    <property type="term" value="C:cytoplasm"/>
    <property type="evidence" value="ECO:0000314"/>
    <property type="project" value="UniProtKB"/>
</dbReference>
<dbReference type="GO" id="GO:0016020">
    <property type="term" value="C:membrane"/>
    <property type="evidence" value="ECO:0007669"/>
    <property type="project" value="UniProtKB-SubCell"/>
</dbReference>
<dbReference type="GO" id="GO:0048471">
    <property type="term" value="C:perinuclear region of cytoplasm"/>
    <property type="evidence" value="ECO:0007669"/>
    <property type="project" value="Ensembl"/>
</dbReference>
<dbReference type="GO" id="GO:0046872">
    <property type="term" value="F:metal ion binding"/>
    <property type="evidence" value="ECO:0007669"/>
    <property type="project" value="UniProtKB-KW"/>
</dbReference>
<dbReference type="GO" id="GO:0009792">
    <property type="term" value="P:embryo development ending in birth or egg hatching"/>
    <property type="evidence" value="ECO:0000314"/>
    <property type="project" value="UniProtKB"/>
</dbReference>
<dbReference type="GO" id="GO:0008544">
    <property type="term" value="P:epidermis development"/>
    <property type="evidence" value="ECO:0000314"/>
    <property type="project" value="UniProtKB"/>
</dbReference>
<dbReference type="GO" id="GO:0030216">
    <property type="term" value="P:keratinocyte differentiation"/>
    <property type="evidence" value="ECO:0000250"/>
    <property type="project" value="UniProtKB"/>
</dbReference>
<dbReference type="GO" id="GO:0090263">
    <property type="term" value="P:positive regulation of canonical Wnt signaling pathway"/>
    <property type="evidence" value="ECO:0007669"/>
    <property type="project" value="Ensembl"/>
</dbReference>
<dbReference type="GO" id="GO:0009612">
    <property type="term" value="P:response to mechanical stimulus"/>
    <property type="evidence" value="ECO:0007669"/>
    <property type="project" value="Ensembl"/>
</dbReference>
<dbReference type="CDD" id="cd08368">
    <property type="entry name" value="LIM"/>
    <property type="match status" value="1"/>
</dbReference>
<dbReference type="FunFam" id="2.10.110.10:FF:000091">
    <property type="entry name" value="Sciellin"/>
    <property type="match status" value="1"/>
</dbReference>
<dbReference type="Gene3D" id="2.10.110.10">
    <property type="entry name" value="Cysteine Rich Protein"/>
    <property type="match status" value="1"/>
</dbReference>
<dbReference type="InterPro" id="IPR052621">
    <property type="entry name" value="Cell_Prolif/Cornif_Regul"/>
</dbReference>
<dbReference type="InterPro" id="IPR001781">
    <property type="entry name" value="Znf_LIM"/>
</dbReference>
<dbReference type="PANTHER" id="PTHR15468:SF7">
    <property type="entry name" value="SCIELLIN"/>
    <property type="match status" value="1"/>
</dbReference>
<dbReference type="PANTHER" id="PTHR15468">
    <property type="entry name" value="ZNF185"/>
    <property type="match status" value="1"/>
</dbReference>
<dbReference type="SMART" id="SM00132">
    <property type="entry name" value="LIM"/>
    <property type="match status" value="1"/>
</dbReference>
<dbReference type="PROSITE" id="PS00478">
    <property type="entry name" value="LIM_DOMAIN_1"/>
    <property type="match status" value="1"/>
</dbReference>
<dbReference type="PROSITE" id="PS50023">
    <property type="entry name" value="LIM_DOMAIN_2"/>
    <property type="match status" value="1"/>
</dbReference>
<keyword id="KW-0007">Acetylation</keyword>
<keyword id="KW-0963">Cytoplasm</keyword>
<keyword id="KW-0440">LIM domain</keyword>
<keyword id="KW-0472">Membrane</keyword>
<keyword id="KW-0479">Metal-binding</keyword>
<keyword id="KW-0597">Phosphoprotein</keyword>
<keyword id="KW-1185">Reference proteome</keyword>
<keyword id="KW-0677">Repeat</keyword>
<keyword id="KW-0862">Zinc</keyword>
<comment type="function">
    <text evidence="1">May function in the assembly or regulation of proteins in the cornified envelope. The LIM domain may be involved in homotypic or heterotypic associations and may function to localize sciellin to the cornified envelope (By similarity).</text>
</comment>
<comment type="subcellular location">
    <subcellularLocation>
        <location>Cytoplasm</location>
    </subcellularLocation>
    <subcellularLocation>
        <location>Membrane</location>
    </subcellularLocation>
    <text>May become cross-linked to membrane proteins by transglutaminase.</text>
</comment>
<comment type="tissue specificity">
    <text>Expressed in the upper layers of stratified epithelia, including, ependyma and choroid plexus of the brain ventricles.</text>
</comment>
<comment type="developmental stage">
    <text>Strong expression was seen in 17-17.5 day-old embryos. Expression was also detected in the amnion of 17.5 day-old embryo.</text>
</comment>